<gene>
    <name type="ORF">ORF7</name>
</gene>
<proteinExistence type="inferred from homology"/>
<keyword id="KW-1035">Host cytoplasm</keyword>
<keyword id="KW-1040">Host Golgi apparatus</keyword>
<keyword id="KW-0449">Lipoprotein</keyword>
<keyword id="KW-0564">Palmitate</keyword>
<keyword id="KW-0597">Phosphoprotein</keyword>
<keyword id="KW-1185">Reference proteome</keyword>
<keyword id="KW-0946">Virion</keyword>
<keyword id="KW-0920">Virion tegument</keyword>
<name>TEG7_VZVD</name>
<organism>
    <name type="scientific">Varicella-zoster virus (strain Dumas)</name>
    <name type="common">HHV-3</name>
    <name type="synonym">Human herpesvirus 3</name>
    <dbReference type="NCBI Taxonomy" id="10338"/>
    <lineage>
        <taxon>Viruses</taxon>
        <taxon>Duplodnaviria</taxon>
        <taxon>Heunggongvirae</taxon>
        <taxon>Peploviricota</taxon>
        <taxon>Herviviricetes</taxon>
        <taxon>Herpesvirales</taxon>
        <taxon>Orthoherpesviridae</taxon>
        <taxon>Alphaherpesvirinae</taxon>
        <taxon>Varicellovirus</taxon>
        <taxon>Varicellovirus humanalpha3</taxon>
        <taxon>Human herpesvirus 3</taxon>
    </lineage>
</organism>
<protein>
    <recommendedName>
        <fullName>Tegument protein UL51 homolog</fullName>
    </recommendedName>
    <alternativeName>
        <fullName>ORF7 protein</fullName>
    </alternativeName>
</protein>
<reference key="1">
    <citation type="journal article" date="1986" name="J. Gen. Virol.">
        <title>The complete DNA sequence of varicella-zoster virus.</title>
        <authorList>
            <person name="Davison A.J."/>
            <person name="Scott J.E."/>
        </authorList>
    </citation>
    <scope>NUCLEOTIDE SEQUENCE [LARGE SCALE GENOMIC DNA]</scope>
</reference>
<evidence type="ECO:0000250" key="1">
    <source>
        <dbReference type="UniProtKB" id="P10235"/>
    </source>
</evidence>
<evidence type="ECO:0000250" key="2">
    <source>
        <dbReference type="UniProtKB" id="P16823"/>
    </source>
</evidence>
<evidence type="ECO:0000305" key="3"/>
<accession>P09271</accession>
<comment type="function">
    <text evidence="1">Plays several roles during the time course of infection, including egress of virus particles from the perinuclear space and secondary envelopment of cytoplasmic capsids that bud into specific trans-Golgi network (TGN)-derived membranes.</text>
</comment>
<comment type="subunit">
    <text evidence="1 2">Oligomerizes. Interacts with ORF53; this interaction mediates ORF53 incorporation to virions.</text>
</comment>
<comment type="subcellular location">
    <subcellularLocation>
        <location evidence="1">Virion tegument</location>
    </subcellularLocation>
    <subcellularLocation>
        <location evidence="1">Host cytoplasm</location>
    </subcellularLocation>
    <subcellularLocation>
        <location evidence="1">Host Golgi apparatus</location>
    </subcellularLocation>
</comment>
<comment type="PTM">
    <text evidence="1">Phosphorylated.</text>
</comment>
<comment type="PTM">
    <text evidence="1">Palmitoylation is necessary for Golgi localization.</text>
</comment>
<comment type="similarity">
    <text evidence="3">Belongs to the herpesviridae UL51 family.</text>
</comment>
<dbReference type="EMBL" id="X04370">
    <property type="protein sequence ID" value="CAA27890.1"/>
    <property type="molecule type" value="Genomic_DNA"/>
</dbReference>
<dbReference type="PIR" id="G27212">
    <property type="entry name" value="WZBE7"/>
</dbReference>
<dbReference type="SMR" id="P09271"/>
<dbReference type="Proteomes" id="UP000002602">
    <property type="component" value="Genome"/>
</dbReference>
<dbReference type="GO" id="GO:0044177">
    <property type="term" value="C:host cell Golgi apparatus"/>
    <property type="evidence" value="ECO:0007669"/>
    <property type="project" value="UniProtKB-SubCell"/>
</dbReference>
<dbReference type="GO" id="GO:0019033">
    <property type="term" value="C:viral tegument"/>
    <property type="evidence" value="ECO:0007669"/>
    <property type="project" value="UniProtKB-SubCell"/>
</dbReference>
<dbReference type="InterPro" id="IPR007625">
    <property type="entry name" value="Herpes_UL51"/>
</dbReference>
<dbReference type="Pfam" id="PF04540">
    <property type="entry name" value="Herpes_UL51"/>
    <property type="match status" value="1"/>
</dbReference>
<feature type="chain" id="PRO_0000116102" description="Tegument protein UL51 homolog">
    <location>
        <begin position="1"/>
        <end position="259"/>
    </location>
</feature>
<feature type="lipid moiety-binding region" description="S-palmitoyl cysteine; by host" evidence="1">
    <location>
        <position position="9"/>
    </location>
</feature>
<organismHost>
    <name type="scientific">Homo sapiens</name>
    <name type="common">Human</name>
    <dbReference type="NCBI Taxonomy" id="9606"/>
</organismHost>
<sequence>MQTVCASLCGYARIPTEEPSYEEVRVNTHPQGAALLRLQEALTAVNGLLPAPLTLEDVVASADNTRRLVRAQALARTYAACSRNIECLKQHHFTEDNPGLNAVVRSHMENSKRLADMCLAAITHLYLSVGAVDVTTDDIVDQTLRMTAESEVVMSDVVLLEKTLGVVAKPQASFDVSHNHELSIAKGENVGLKTSPIKSEATQLSEIKPPLIEVSDNNTSNLTKKTYPTETLQPVLTPKQTQDVQRTTPAIKKSHVMLV</sequence>